<name>LIFO_BURCM</name>
<sequence length="344" mass="36602">MTAREGRAPRVRRVAVYGAVGLAAIAGVAIWSGAASHRGADTARLSADAAARDGASAAPPPPARPASAGMPSPLAGSSAPRLPLDAAGHLAKSRAVRDFFDYCLSARSDLSATALDALVVREIAAQLDGTMAQPEALDVWHRYRAYLDALAKLPDAGAVDKSDLGALQLALDQRVSIAYRTLGDWSQPFFGAEQWRQRYDLARLKIAQDRTLTEAQKAERLAALAQQMPGDERAARQKADRQQAAIDQIAQLQKSGATPDAMRAQLTQTLGPDAAARVAQMQQDDASWQSRYADYAAQRAQIEAAGLSPQDRDAQIAALRQRMFTKPGEAVRAASLDRGAAAAR</sequence>
<comment type="function">
    <text evidence="2">May be involved in the folding of the extracellular lipase during its passage through the periplasm.</text>
</comment>
<comment type="subcellular location">
    <subcellularLocation>
        <location evidence="2">Cell inner membrane</location>
        <topology evidence="2">Single-pass membrane protein</topology>
        <orientation evidence="1">Periplasmic side</orientation>
    </subcellularLocation>
</comment>
<comment type="similarity">
    <text evidence="2">Belongs to the lipase chaperone family.</text>
</comment>
<keyword id="KW-0997">Cell inner membrane</keyword>
<keyword id="KW-1003">Cell membrane</keyword>
<keyword id="KW-0143">Chaperone</keyword>
<keyword id="KW-0442">Lipid degradation</keyword>
<keyword id="KW-0443">Lipid metabolism</keyword>
<keyword id="KW-0472">Membrane</keyword>
<keyword id="KW-0812">Transmembrane</keyword>
<keyword id="KW-1133">Transmembrane helix</keyword>
<proteinExistence type="inferred from homology"/>
<protein>
    <recommendedName>
        <fullName evidence="2">Lipase chaperone</fullName>
    </recommendedName>
    <alternativeName>
        <fullName evidence="2">Lipase activator protein</fullName>
    </alternativeName>
    <alternativeName>
        <fullName evidence="2">Lipase foldase</fullName>
    </alternativeName>
    <alternativeName>
        <fullName evidence="2">Lipase helper protein</fullName>
    </alternativeName>
    <alternativeName>
        <fullName evidence="2">Lipase modulator</fullName>
    </alternativeName>
</protein>
<dbReference type="EMBL" id="CP000441">
    <property type="protein sequence ID" value="ABI88849.1"/>
    <property type="molecule type" value="Genomic_DNA"/>
</dbReference>
<dbReference type="RefSeq" id="WP_011658335.1">
    <property type="nucleotide sequence ID" value="NC_008391.1"/>
</dbReference>
<dbReference type="SMR" id="Q0BAH4"/>
<dbReference type="GeneID" id="93086303"/>
<dbReference type="KEGG" id="bam:Bamb_3294"/>
<dbReference type="PATRIC" id="fig|339670.21.peg.3500"/>
<dbReference type="eggNOG" id="COG5380">
    <property type="taxonomic scope" value="Bacteria"/>
</dbReference>
<dbReference type="Proteomes" id="UP000000662">
    <property type="component" value="Chromosome 2"/>
</dbReference>
<dbReference type="GO" id="GO:0005886">
    <property type="term" value="C:plasma membrane"/>
    <property type="evidence" value="ECO:0007669"/>
    <property type="project" value="UniProtKB-SubCell"/>
</dbReference>
<dbReference type="GO" id="GO:0051082">
    <property type="term" value="F:unfolded protein binding"/>
    <property type="evidence" value="ECO:0007669"/>
    <property type="project" value="UniProtKB-UniRule"/>
</dbReference>
<dbReference type="GO" id="GO:0016042">
    <property type="term" value="P:lipid catabolic process"/>
    <property type="evidence" value="ECO:0007669"/>
    <property type="project" value="UniProtKB-UniRule"/>
</dbReference>
<dbReference type="GO" id="GO:0006457">
    <property type="term" value="P:protein folding"/>
    <property type="evidence" value="ECO:0007669"/>
    <property type="project" value="UniProtKB-UniRule"/>
</dbReference>
<dbReference type="HAMAP" id="MF_00790">
    <property type="entry name" value="Lipase_chap"/>
    <property type="match status" value="1"/>
</dbReference>
<dbReference type="InterPro" id="IPR004961">
    <property type="entry name" value="Lipase_chaperone"/>
</dbReference>
<dbReference type="NCBIfam" id="NF002333">
    <property type="entry name" value="PRK01294.1-1"/>
    <property type="match status" value="1"/>
</dbReference>
<dbReference type="Pfam" id="PF03280">
    <property type="entry name" value="Lipase_chap"/>
    <property type="match status" value="1"/>
</dbReference>
<dbReference type="SUPFAM" id="SSF158855">
    <property type="entry name" value="Lipase chaperone-like"/>
    <property type="match status" value="1"/>
</dbReference>
<accession>Q0BAH4</accession>
<evidence type="ECO:0000250" key="1"/>
<evidence type="ECO:0000255" key="2">
    <source>
        <dbReference type="HAMAP-Rule" id="MF_00790"/>
    </source>
</evidence>
<evidence type="ECO:0000256" key="3">
    <source>
        <dbReference type="SAM" id="MobiDB-lite"/>
    </source>
</evidence>
<gene>
    <name evidence="2" type="primary">lifO</name>
    <name type="ordered locus">Bamb_3294</name>
</gene>
<organism>
    <name type="scientific">Burkholderia ambifaria (strain ATCC BAA-244 / DSM 16087 / CCUG 44356 / LMG 19182 / AMMD)</name>
    <name type="common">Burkholderia cepacia (strain AMMD)</name>
    <dbReference type="NCBI Taxonomy" id="339670"/>
    <lineage>
        <taxon>Bacteria</taxon>
        <taxon>Pseudomonadati</taxon>
        <taxon>Pseudomonadota</taxon>
        <taxon>Betaproteobacteria</taxon>
        <taxon>Burkholderiales</taxon>
        <taxon>Burkholderiaceae</taxon>
        <taxon>Burkholderia</taxon>
        <taxon>Burkholderia cepacia complex</taxon>
    </lineage>
</organism>
<reference key="1">
    <citation type="submission" date="2006-08" db="EMBL/GenBank/DDBJ databases">
        <title>Complete sequence of chromosome 2 of Burkholderia cepacia AMMD.</title>
        <authorList>
            <person name="Copeland A."/>
            <person name="Lucas S."/>
            <person name="Lapidus A."/>
            <person name="Barry K."/>
            <person name="Detter J.C."/>
            <person name="Glavina del Rio T."/>
            <person name="Hammon N."/>
            <person name="Israni S."/>
            <person name="Pitluck S."/>
            <person name="Bruce D."/>
            <person name="Chain P."/>
            <person name="Malfatti S."/>
            <person name="Shin M."/>
            <person name="Vergez L."/>
            <person name="Schmutz J."/>
            <person name="Larimer F."/>
            <person name="Land M."/>
            <person name="Hauser L."/>
            <person name="Kyrpides N."/>
            <person name="Kim E."/>
            <person name="Parke J."/>
            <person name="Coenye T."/>
            <person name="Konstantinidis K."/>
            <person name="Ramette A."/>
            <person name="Tiedje J."/>
            <person name="Richardson P."/>
        </authorList>
    </citation>
    <scope>NUCLEOTIDE SEQUENCE [LARGE SCALE GENOMIC DNA]</scope>
    <source>
        <strain>ATCC BAA-244 / DSM 16087 / CCUG 44356 / LMG 19182 / AMMD</strain>
    </source>
</reference>
<feature type="chain" id="PRO_1000046913" description="Lipase chaperone">
    <location>
        <begin position="1"/>
        <end position="344"/>
    </location>
</feature>
<feature type="transmembrane region" description="Helical" evidence="2">
    <location>
        <begin position="14"/>
        <end position="34"/>
    </location>
</feature>
<feature type="region of interest" description="Disordered" evidence="3">
    <location>
        <begin position="45"/>
        <end position="78"/>
    </location>
</feature>
<feature type="compositionally biased region" description="Low complexity" evidence="3">
    <location>
        <begin position="45"/>
        <end position="57"/>
    </location>
</feature>